<feature type="transit peptide" description="Mitochondrion">
    <location>
        <begin position="1"/>
        <end position="18"/>
    </location>
</feature>
<feature type="chain" id="PRO_0000030544" description="Large ribosomal subunit protein uL5m">
    <location>
        <begin position="19"/>
        <end position="287"/>
    </location>
</feature>
<feature type="region of interest" description="Disordered" evidence="2">
    <location>
        <begin position="80"/>
        <end position="109"/>
    </location>
</feature>
<feature type="compositionally biased region" description="Basic and acidic residues" evidence="2">
    <location>
        <begin position="80"/>
        <end position="89"/>
    </location>
</feature>
<gene>
    <name type="primary">mrpl7</name>
    <name type="ORF">SPBC2F12.02c</name>
</gene>
<accession>O14337</accession>
<organism>
    <name type="scientific">Schizosaccharomyces pombe (strain 972 / ATCC 24843)</name>
    <name type="common">Fission yeast</name>
    <dbReference type="NCBI Taxonomy" id="284812"/>
    <lineage>
        <taxon>Eukaryota</taxon>
        <taxon>Fungi</taxon>
        <taxon>Dikarya</taxon>
        <taxon>Ascomycota</taxon>
        <taxon>Taphrinomycotina</taxon>
        <taxon>Schizosaccharomycetes</taxon>
        <taxon>Schizosaccharomycetales</taxon>
        <taxon>Schizosaccharomycetaceae</taxon>
        <taxon>Schizosaccharomyces</taxon>
    </lineage>
</organism>
<sequence length="287" mass="32384">MLGIRKNIRISVNFLQRRTITVKQKLGKNRPLPGWDPNSEYFRPGPTMLNRLQEHLHDTILPDVLAASYRHDIDTALSTDEHTQKDRLPRWIGDNPYYKNRPPQKMRGNKPLLPVKESVNPKNLPSISKVVVSTMHKEALVDKTQLLSTMMAFRSITGLQPEIVYARKDVSPWKLRSGVPVGVKVTLTGESMYTFLSILSELVLPQLHDFKGLSPTSGDQTGNISFGLPSEVMPLFPQIEAVYEMYPHSLPGFNVNITTNSKDTRLARFFVSSLIPFTDGNKEGYVG</sequence>
<dbReference type="EMBL" id="CU329671">
    <property type="protein sequence ID" value="CAB10151.1"/>
    <property type="molecule type" value="Genomic_DNA"/>
</dbReference>
<dbReference type="PIR" id="T40138">
    <property type="entry name" value="T40138"/>
</dbReference>
<dbReference type="RefSeq" id="NP_595713.1">
    <property type="nucleotide sequence ID" value="NM_001021610.2"/>
</dbReference>
<dbReference type="SMR" id="O14337"/>
<dbReference type="BioGRID" id="276987">
    <property type="interactions" value="2"/>
</dbReference>
<dbReference type="ComplexPortal" id="CPX-10323">
    <property type="entry name" value="54S mitochondrial large ribosomal subunit"/>
</dbReference>
<dbReference type="FunCoup" id="O14337">
    <property type="interactions" value="267"/>
</dbReference>
<dbReference type="STRING" id="284812.O14337"/>
<dbReference type="iPTMnet" id="O14337"/>
<dbReference type="PaxDb" id="4896-SPBC2F12.02c.1"/>
<dbReference type="EnsemblFungi" id="SPBC2F12.02c.1">
    <property type="protein sequence ID" value="SPBC2F12.02c.1:pep"/>
    <property type="gene ID" value="SPBC2F12.02c"/>
</dbReference>
<dbReference type="GeneID" id="2540459"/>
<dbReference type="KEGG" id="spo:2540459"/>
<dbReference type="PomBase" id="SPBC2F12.02c">
    <property type="gene designation" value="mrpl7"/>
</dbReference>
<dbReference type="VEuPathDB" id="FungiDB:SPBC2F12.02c"/>
<dbReference type="eggNOG" id="KOG0398">
    <property type="taxonomic scope" value="Eukaryota"/>
</dbReference>
<dbReference type="HOGENOM" id="CLU_061015_1_1_1"/>
<dbReference type="InParanoid" id="O14337"/>
<dbReference type="OMA" id="HITIHTT"/>
<dbReference type="PhylomeDB" id="O14337"/>
<dbReference type="PRO" id="PR:O14337"/>
<dbReference type="Proteomes" id="UP000002485">
    <property type="component" value="Chromosome II"/>
</dbReference>
<dbReference type="GO" id="GO:0022625">
    <property type="term" value="C:cytosolic large ribosomal subunit"/>
    <property type="evidence" value="ECO:0000318"/>
    <property type="project" value="GO_Central"/>
</dbReference>
<dbReference type="GO" id="GO:0005762">
    <property type="term" value="C:mitochondrial large ribosomal subunit"/>
    <property type="evidence" value="ECO:0000266"/>
    <property type="project" value="PomBase"/>
</dbReference>
<dbReference type="GO" id="GO:0005739">
    <property type="term" value="C:mitochondrion"/>
    <property type="evidence" value="ECO:0007005"/>
    <property type="project" value="PomBase"/>
</dbReference>
<dbReference type="GO" id="GO:0003723">
    <property type="term" value="F:RNA binding"/>
    <property type="evidence" value="ECO:0000318"/>
    <property type="project" value="GO_Central"/>
</dbReference>
<dbReference type="GO" id="GO:0003735">
    <property type="term" value="F:structural constituent of ribosome"/>
    <property type="evidence" value="ECO:0000266"/>
    <property type="project" value="PomBase"/>
</dbReference>
<dbReference type="GO" id="GO:0032543">
    <property type="term" value="P:mitochondrial translation"/>
    <property type="evidence" value="ECO:0000266"/>
    <property type="project" value="PomBase"/>
</dbReference>
<dbReference type="GO" id="GO:0006412">
    <property type="term" value="P:translation"/>
    <property type="evidence" value="ECO:0000318"/>
    <property type="project" value="GO_Central"/>
</dbReference>
<dbReference type="Gene3D" id="3.30.1440.10">
    <property type="match status" value="1"/>
</dbReference>
<dbReference type="InterPro" id="IPR002132">
    <property type="entry name" value="Ribosomal_uL5"/>
</dbReference>
<dbReference type="InterPro" id="IPR031309">
    <property type="entry name" value="Ribosomal_uL5_C"/>
</dbReference>
<dbReference type="InterPro" id="IPR022803">
    <property type="entry name" value="Ribosomal_uL5_dom_sf"/>
</dbReference>
<dbReference type="InterPro" id="IPR031310">
    <property type="entry name" value="Ribosomal_uL5_N"/>
</dbReference>
<dbReference type="PANTHER" id="PTHR11994">
    <property type="entry name" value="60S RIBOSOMAL PROTEIN L11-RELATED"/>
    <property type="match status" value="1"/>
</dbReference>
<dbReference type="Pfam" id="PF00281">
    <property type="entry name" value="Ribosomal_L5"/>
    <property type="match status" value="1"/>
</dbReference>
<dbReference type="Pfam" id="PF00673">
    <property type="entry name" value="Ribosomal_L5_C"/>
    <property type="match status" value="1"/>
</dbReference>
<dbReference type="SUPFAM" id="SSF55282">
    <property type="entry name" value="RL5-like"/>
    <property type="match status" value="1"/>
</dbReference>
<name>RM07_SCHPO</name>
<protein>
    <recommendedName>
        <fullName evidence="4">Large ribosomal subunit protein uL5m</fullName>
    </recommendedName>
    <alternativeName>
        <fullName>Probable 54S ribosomal protein L7, mitochondrial</fullName>
    </alternativeName>
</protein>
<keyword id="KW-0496">Mitochondrion</keyword>
<keyword id="KW-1185">Reference proteome</keyword>
<keyword id="KW-0687">Ribonucleoprotein</keyword>
<keyword id="KW-0689">Ribosomal protein</keyword>
<keyword id="KW-0809">Transit peptide</keyword>
<evidence type="ECO:0000250" key="1">
    <source>
        <dbReference type="UniProtKB" id="P36519"/>
    </source>
</evidence>
<evidence type="ECO:0000256" key="2">
    <source>
        <dbReference type="SAM" id="MobiDB-lite"/>
    </source>
</evidence>
<evidence type="ECO:0000269" key="3">
    <source>
    </source>
</evidence>
<evidence type="ECO:0000305" key="4"/>
<reference key="1">
    <citation type="journal article" date="2002" name="Nature">
        <title>The genome sequence of Schizosaccharomyces pombe.</title>
        <authorList>
            <person name="Wood V."/>
            <person name="Gwilliam R."/>
            <person name="Rajandream M.A."/>
            <person name="Lyne M.H."/>
            <person name="Lyne R."/>
            <person name="Stewart A."/>
            <person name="Sgouros J.G."/>
            <person name="Peat N."/>
            <person name="Hayles J."/>
            <person name="Baker S.G."/>
            <person name="Basham D."/>
            <person name="Bowman S."/>
            <person name="Brooks K."/>
            <person name="Brown D."/>
            <person name="Brown S."/>
            <person name="Chillingworth T."/>
            <person name="Churcher C.M."/>
            <person name="Collins M."/>
            <person name="Connor R."/>
            <person name="Cronin A."/>
            <person name="Davis P."/>
            <person name="Feltwell T."/>
            <person name="Fraser A."/>
            <person name="Gentles S."/>
            <person name="Goble A."/>
            <person name="Hamlin N."/>
            <person name="Harris D.E."/>
            <person name="Hidalgo J."/>
            <person name="Hodgson G."/>
            <person name="Holroyd S."/>
            <person name="Hornsby T."/>
            <person name="Howarth S."/>
            <person name="Huckle E.J."/>
            <person name="Hunt S."/>
            <person name="Jagels K."/>
            <person name="James K.D."/>
            <person name="Jones L."/>
            <person name="Jones M."/>
            <person name="Leather S."/>
            <person name="McDonald S."/>
            <person name="McLean J."/>
            <person name="Mooney P."/>
            <person name="Moule S."/>
            <person name="Mungall K.L."/>
            <person name="Murphy L.D."/>
            <person name="Niblett D."/>
            <person name="Odell C."/>
            <person name="Oliver K."/>
            <person name="O'Neil S."/>
            <person name="Pearson D."/>
            <person name="Quail M.A."/>
            <person name="Rabbinowitsch E."/>
            <person name="Rutherford K.M."/>
            <person name="Rutter S."/>
            <person name="Saunders D."/>
            <person name="Seeger K."/>
            <person name="Sharp S."/>
            <person name="Skelton J."/>
            <person name="Simmonds M.N."/>
            <person name="Squares R."/>
            <person name="Squares S."/>
            <person name="Stevens K."/>
            <person name="Taylor K."/>
            <person name="Taylor R.G."/>
            <person name="Tivey A."/>
            <person name="Walsh S.V."/>
            <person name="Warren T."/>
            <person name="Whitehead S."/>
            <person name="Woodward J.R."/>
            <person name="Volckaert G."/>
            <person name="Aert R."/>
            <person name="Robben J."/>
            <person name="Grymonprez B."/>
            <person name="Weltjens I."/>
            <person name="Vanstreels E."/>
            <person name="Rieger M."/>
            <person name="Schaefer M."/>
            <person name="Mueller-Auer S."/>
            <person name="Gabel C."/>
            <person name="Fuchs M."/>
            <person name="Duesterhoeft A."/>
            <person name="Fritzc C."/>
            <person name="Holzer E."/>
            <person name="Moestl D."/>
            <person name="Hilbert H."/>
            <person name="Borzym K."/>
            <person name="Langer I."/>
            <person name="Beck A."/>
            <person name="Lehrach H."/>
            <person name="Reinhardt R."/>
            <person name="Pohl T.M."/>
            <person name="Eger P."/>
            <person name="Zimmermann W."/>
            <person name="Wedler H."/>
            <person name="Wambutt R."/>
            <person name="Purnelle B."/>
            <person name="Goffeau A."/>
            <person name="Cadieu E."/>
            <person name="Dreano S."/>
            <person name="Gloux S."/>
            <person name="Lelaure V."/>
            <person name="Mottier S."/>
            <person name="Galibert F."/>
            <person name="Aves S.J."/>
            <person name="Xiang Z."/>
            <person name="Hunt C."/>
            <person name="Moore K."/>
            <person name="Hurst S.M."/>
            <person name="Lucas M."/>
            <person name="Rochet M."/>
            <person name="Gaillardin C."/>
            <person name="Tallada V.A."/>
            <person name="Garzon A."/>
            <person name="Thode G."/>
            <person name="Daga R.R."/>
            <person name="Cruzado L."/>
            <person name="Jimenez J."/>
            <person name="Sanchez M."/>
            <person name="del Rey F."/>
            <person name="Benito J."/>
            <person name="Dominguez A."/>
            <person name="Revuelta J.L."/>
            <person name="Moreno S."/>
            <person name="Armstrong J."/>
            <person name="Forsburg S.L."/>
            <person name="Cerutti L."/>
            <person name="Lowe T."/>
            <person name="McCombie W.R."/>
            <person name="Paulsen I."/>
            <person name="Potashkin J."/>
            <person name="Shpakovski G.V."/>
            <person name="Ussery D."/>
            <person name="Barrell B.G."/>
            <person name="Nurse P."/>
        </authorList>
    </citation>
    <scope>NUCLEOTIDE SEQUENCE [LARGE SCALE GENOMIC DNA]</scope>
    <source>
        <strain>972 / ATCC 24843</strain>
    </source>
</reference>
<reference key="2">
    <citation type="journal article" date="2006" name="Nat. Biotechnol.">
        <title>ORFeome cloning and global analysis of protein localization in the fission yeast Schizosaccharomyces pombe.</title>
        <authorList>
            <person name="Matsuyama A."/>
            <person name="Arai R."/>
            <person name="Yashiroda Y."/>
            <person name="Shirai A."/>
            <person name="Kamata A."/>
            <person name="Sekido S."/>
            <person name="Kobayashi Y."/>
            <person name="Hashimoto A."/>
            <person name="Hamamoto M."/>
            <person name="Hiraoka Y."/>
            <person name="Horinouchi S."/>
            <person name="Yoshida M."/>
        </authorList>
    </citation>
    <scope>SUBCELLULAR LOCATION [LARGE SCALE ANALYSIS]</scope>
</reference>
<comment type="function">
    <text evidence="1">Component of the mitochondrial ribosome (mitoribosome), a dedicated translation machinery responsible for the synthesis of mitochondrial genome-encoded proteins, including at least some of the essential transmembrane subunits of the mitochondrial respiratory chain. The mitoribosomes are attached to the mitochondrial inner membrane and translation products are cotranslationally integrated into the membrane.</text>
</comment>
<comment type="subunit">
    <text evidence="1">Component of the mitochondrial large ribosomal subunit (mt-LSU). Mature yeast 74S mitochondrial ribosomes consist of a small (37S) and a large (54S) subunit. The 37S small subunit contains a 15S ribosomal RNA (15S mt-rRNA) and at least 32 different proteins. The 54S large subunit contains a 21S rRNA (21S mt-rRNA) and at least 45 different proteins. Unlike bacterial L5, uL5m does not bind zinc.</text>
</comment>
<comment type="subcellular location">
    <subcellularLocation>
        <location evidence="3">Mitochondrion</location>
    </subcellularLocation>
</comment>
<comment type="similarity">
    <text evidence="4">Belongs to the universal ribosomal protein uL5 family.</text>
</comment>
<proteinExistence type="inferred from homology"/>